<protein>
    <recommendedName>
        <fullName evidence="1">UPF0312 protein Sden_2128</fullName>
    </recommendedName>
</protein>
<accession>Q12MB6</accession>
<feature type="signal peptide" evidence="1">
    <location>
        <begin position="1"/>
        <end position="22"/>
    </location>
</feature>
<feature type="chain" id="PRO_5000114657" description="UPF0312 protein Sden_2128">
    <location>
        <begin position="23"/>
        <end position="191"/>
    </location>
</feature>
<comment type="subcellular location">
    <subcellularLocation>
        <location evidence="1">Periplasm</location>
    </subcellularLocation>
</comment>
<comment type="similarity">
    <text evidence="1">Belongs to the UPF0312 family. Type 1 subfamily.</text>
</comment>
<name>Y2128_SHEDO</name>
<dbReference type="EMBL" id="CP000302">
    <property type="protein sequence ID" value="ABE55410.1"/>
    <property type="molecule type" value="Genomic_DNA"/>
</dbReference>
<dbReference type="RefSeq" id="WP_011496565.1">
    <property type="nucleotide sequence ID" value="NC_007954.1"/>
</dbReference>
<dbReference type="SMR" id="Q12MB6"/>
<dbReference type="STRING" id="318161.Sden_2128"/>
<dbReference type="KEGG" id="sdn:Sden_2128"/>
<dbReference type="eggNOG" id="COG2353">
    <property type="taxonomic scope" value="Bacteria"/>
</dbReference>
<dbReference type="HOGENOM" id="CLU_071003_1_2_6"/>
<dbReference type="OrthoDB" id="9811006at2"/>
<dbReference type="Proteomes" id="UP000001982">
    <property type="component" value="Chromosome"/>
</dbReference>
<dbReference type="GO" id="GO:0042597">
    <property type="term" value="C:periplasmic space"/>
    <property type="evidence" value="ECO:0007669"/>
    <property type="project" value="UniProtKB-SubCell"/>
</dbReference>
<dbReference type="Gene3D" id="2.40.128.110">
    <property type="entry name" value="Lipid/polyisoprenoid-binding, YceI-like"/>
    <property type="match status" value="1"/>
</dbReference>
<dbReference type="HAMAP" id="MF_00780">
    <property type="entry name" value="UPF0312"/>
    <property type="match status" value="1"/>
</dbReference>
<dbReference type="InterPro" id="IPR007372">
    <property type="entry name" value="Lipid/polyisoprenoid-bd_YceI"/>
</dbReference>
<dbReference type="InterPro" id="IPR036761">
    <property type="entry name" value="TTHA0802/YceI-like_sf"/>
</dbReference>
<dbReference type="InterPro" id="IPR023480">
    <property type="entry name" value="UPF0312/YceI"/>
</dbReference>
<dbReference type="NCBIfam" id="NF002994">
    <property type="entry name" value="PRK03757.1"/>
    <property type="match status" value="1"/>
</dbReference>
<dbReference type="PANTHER" id="PTHR34406">
    <property type="entry name" value="PROTEIN YCEI"/>
    <property type="match status" value="1"/>
</dbReference>
<dbReference type="PANTHER" id="PTHR34406:SF1">
    <property type="entry name" value="PROTEIN YCEI"/>
    <property type="match status" value="1"/>
</dbReference>
<dbReference type="Pfam" id="PF04264">
    <property type="entry name" value="YceI"/>
    <property type="match status" value="1"/>
</dbReference>
<dbReference type="SMART" id="SM00867">
    <property type="entry name" value="YceI"/>
    <property type="match status" value="1"/>
</dbReference>
<dbReference type="SUPFAM" id="SSF101874">
    <property type="entry name" value="YceI-like"/>
    <property type="match status" value="1"/>
</dbReference>
<keyword id="KW-0574">Periplasm</keyword>
<keyword id="KW-1185">Reference proteome</keyword>
<keyword id="KW-0732">Signal</keyword>
<organism>
    <name type="scientific">Shewanella denitrificans (strain OS217 / ATCC BAA-1090 / DSM 15013)</name>
    <dbReference type="NCBI Taxonomy" id="318161"/>
    <lineage>
        <taxon>Bacteria</taxon>
        <taxon>Pseudomonadati</taxon>
        <taxon>Pseudomonadota</taxon>
        <taxon>Gammaproteobacteria</taxon>
        <taxon>Alteromonadales</taxon>
        <taxon>Shewanellaceae</taxon>
        <taxon>Shewanella</taxon>
    </lineage>
</organism>
<sequence>MKKHLLASLLGASLLLPTAVNAADYVIDTKGAHASIQFSVSHLGYSFVVGRFNEFDGKFSFDAAKVSDGKVEVNINTNSVDSNHAERDKHLRSDDFLNTAKFPAAKFVSTSVADKGNGDLWITGDLSLNGVTKPVTIKAHTVGEGQDPWGGYRAGFVGSTEFTMKDFGIKMDLGPASANVKLDLVVEGIKQ</sequence>
<proteinExistence type="inferred from homology"/>
<evidence type="ECO:0000255" key="1">
    <source>
        <dbReference type="HAMAP-Rule" id="MF_00780"/>
    </source>
</evidence>
<gene>
    <name type="ordered locus">Sden_2128</name>
</gene>
<reference key="1">
    <citation type="submission" date="2006-03" db="EMBL/GenBank/DDBJ databases">
        <title>Complete sequence of Shewanella denitrificans OS217.</title>
        <authorList>
            <consortium name="US DOE Joint Genome Institute"/>
            <person name="Copeland A."/>
            <person name="Lucas S."/>
            <person name="Lapidus A."/>
            <person name="Barry K."/>
            <person name="Detter J.C."/>
            <person name="Glavina del Rio T."/>
            <person name="Hammon N."/>
            <person name="Israni S."/>
            <person name="Dalin E."/>
            <person name="Tice H."/>
            <person name="Pitluck S."/>
            <person name="Brettin T."/>
            <person name="Bruce D."/>
            <person name="Han C."/>
            <person name="Tapia R."/>
            <person name="Gilna P."/>
            <person name="Kiss H."/>
            <person name="Schmutz J."/>
            <person name="Larimer F."/>
            <person name="Land M."/>
            <person name="Hauser L."/>
            <person name="Kyrpides N."/>
            <person name="Lykidis A."/>
            <person name="Richardson P."/>
        </authorList>
    </citation>
    <scope>NUCLEOTIDE SEQUENCE [LARGE SCALE GENOMIC DNA]</scope>
    <source>
        <strain>OS217 / ATCC BAA-1090 / DSM 15013</strain>
    </source>
</reference>